<dbReference type="EC" id="2.3.1.48" evidence="3"/>
<dbReference type="EC" id="2.3.1.-" evidence="2 3"/>
<dbReference type="EMBL" id="CR382135">
    <property type="protein sequence ID" value="CAG86300.2"/>
    <property type="molecule type" value="Genomic_DNA"/>
</dbReference>
<dbReference type="RefSeq" id="XP_458224.2">
    <property type="nucleotide sequence ID" value="XM_458224.1"/>
</dbReference>
<dbReference type="SMR" id="Q6BU95"/>
<dbReference type="FunCoup" id="Q6BU95">
    <property type="interactions" value="1023"/>
</dbReference>
<dbReference type="STRING" id="284592.Q6BU95"/>
<dbReference type="GeneID" id="2900534"/>
<dbReference type="KEGG" id="dha:DEHA2C12628g"/>
<dbReference type="VEuPathDB" id="FungiDB:DEHA2C12628g"/>
<dbReference type="eggNOG" id="KOG2747">
    <property type="taxonomic scope" value="Eukaryota"/>
</dbReference>
<dbReference type="HOGENOM" id="CLU_011815_2_0_1"/>
<dbReference type="InParanoid" id="Q6BU95"/>
<dbReference type="OMA" id="QYQRHGY"/>
<dbReference type="OrthoDB" id="787137at2759"/>
<dbReference type="Proteomes" id="UP000000599">
    <property type="component" value="Chromosome C"/>
</dbReference>
<dbReference type="GO" id="GO:0035267">
    <property type="term" value="C:NuA4 histone acetyltransferase complex"/>
    <property type="evidence" value="ECO:0007669"/>
    <property type="project" value="EnsemblFungi"/>
</dbReference>
<dbReference type="GO" id="GO:0000786">
    <property type="term" value="C:nucleosome"/>
    <property type="evidence" value="ECO:0007669"/>
    <property type="project" value="EnsemblFungi"/>
</dbReference>
<dbReference type="GO" id="GO:0005634">
    <property type="term" value="C:nucleus"/>
    <property type="evidence" value="ECO:0007669"/>
    <property type="project" value="UniProtKB-SubCell"/>
</dbReference>
<dbReference type="GO" id="GO:0032777">
    <property type="term" value="C:piccolo histone acetyltransferase complex"/>
    <property type="evidence" value="ECO:0007669"/>
    <property type="project" value="EnsemblFungi"/>
</dbReference>
<dbReference type="GO" id="GO:0003682">
    <property type="term" value="F:chromatin binding"/>
    <property type="evidence" value="ECO:0007669"/>
    <property type="project" value="TreeGrafter"/>
</dbReference>
<dbReference type="GO" id="GO:0140068">
    <property type="term" value="F:histone crotonyltransferase activity"/>
    <property type="evidence" value="ECO:0007669"/>
    <property type="project" value="EnsemblFungi"/>
</dbReference>
<dbReference type="GO" id="GO:0010485">
    <property type="term" value="F:histone H4 acetyltransferase activity"/>
    <property type="evidence" value="ECO:0007669"/>
    <property type="project" value="EnsemblFungi"/>
</dbReference>
<dbReference type="GO" id="GO:0106226">
    <property type="term" value="F:peptide 2-hydroxyisobutyryltransferase activity"/>
    <property type="evidence" value="ECO:0007669"/>
    <property type="project" value="RHEA"/>
</dbReference>
<dbReference type="GO" id="GO:0003712">
    <property type="term" value="F:transcription coregulator activity"/>
    <property type="evidence" value="ECO:0007669"/>
    <property type="project" value="EnsemblFungi"/>
</dbReference>
<dbReference type="GO" id="GO:0006281">
    <property type="term" value="P:DNA repair"/>
    <property type="evidence" value="ECO:0007669"/>
    <property type="project" value="UniProtKB-KW"/>
</dbReference>
<dbReference type="GO" id="GO:0006354">
    <property type="term" value="P:DNA-templated transcription elongation"/>
    <property type="evidence" value="ECO:0007669"/>
    <property type="project" value="EnsemblFungi"/>
</dbReference>
<dbReference type="GO" id="GO:0016239">
    <property type="term" value="P:positive regulation of macroautophagy"/>
    <property type="evidence" value="ECO:0007669"/>
    <property type="project" value="EnsemblFungi"/>
</dbReference>
<dbReference type="GO" id="GO:0032968">
    <property type="term" value="P:positive regulation of transcription elongation by RNA polymerase II"/>
    <property type="evidence" value="ECO:0007669"/>
    <property type="project" value="EnsemblFungi"/>
</dbReference>
<dbReference type="GO" id="GO:0010867">
    <property type="term" value="P:positive regulation of triglyceride biosynthetic process"/>
    <property type="evidence" value="ECO:0007669"/>
    <property type="project" value="EnsemblFungi"/>
</dbReference>
<dbReference type="GO" id="GO:0000183">
    <property type="term" value="P:rDNA heterochromatin formation"/>
    <property type="evidence" value="ECO:0007669"/>
    <property type="project" value="EnsemblFungi"/>
</dbReference>
<dbReference type="GO" id="GO:0051726">
    <property type="term" value="P:regulation of cell cycle"/>
    <property type="evidence" value="ECO:0007669"/>
    <property type="project" value="EnsemblFungi"/>
</dbReference>
<dbReference type="FunFam" id="1.10.10.10:FF:000526">
    <property type="entry name" value="Histone acetyltransferase"/>
    <property type="match status" value="1"/>
</dbReference>
<dbReference type="FunFam" id="2.30.30.140:FF:000013">
    <property type="entry name" value="Histone acetyltransferase"/>
    <property type="match status" value="1"/>
</dbReference>
<dbReference type="FunFam" id="3.30.60.60:FF:000009">
    <property type="entry name" value="Histone acetyltransferase"/>
    <property type="match status" value="1"/>
</dbReference>
<dbReference type="FunFam" id="3.40.630.30:FF:000094">
    <property type="entry name" value="Histone acetyltransferase"/>
    <property type="match status" value="1"/>
</dbReference>
<dbReference type="Gene3D" id="2.30.30.140">
    <property type="match status" value="1"/>
</dbReference>
<dbReference type="Gene3D" id="3.40.630.30">
    <property type="match status" value="1"/>
</dbReference>
<dbReference type="Gene3D" id="3.30.60.60">
    <property type="entry name" value="N-acetyl transferase-like"/>
    <property type="match status" value="1"/>
</dbReference>
<dbReference type="Gene3D" id="1.10.10.10">
    <property type="entry name" value="Winged helix-like DNA-binding domain superfamily/Winged helix DNA-binding domain"/>
    <property type="match status" value="1"/>
</dbReference>
<dbReference type="InterPro" id="IPR016181">
    <property type="entry name" value="Acyl_CoA_acyltransferase"/>
</dbReference>
<dbReference type="InterPro" id="IPR016197">
    <property type="entry name" value="Chromo-like_dom_sf"/>
</dbReference>
<dbReference type="InterPro" id="IPR000953">
    <property type="entry name" value="Chromo/chromo_shadow_dom"/>
</dbReference>
<dbReference type="InterPro" id="IPR002717">
    <property type="entry name" value="HAT_MYST-type"/>
</dbReference>
<dbReference type="InterPro" id="IPR050603">
    <property type="entry name" value="MYST_HAT"/>
</dbReference>
<dbReference type="InterPro" id="IPR025995">
    <property type="entry name" value="Tudor-knot"/>
</dbReference>
<dbReference type="InterPro" id="IPR036388">
    <property type="entry name" value="WH-like_DNA-bd_sf"/>
</dbReference>
<dbReference type="InterPro" id="IPR040706">
    <property type="entry name" value="Zf-MYST"/>
</dbReference>
<dbReference type="PANTHER" id="PTHR10615">
    <property type="entry name" value="HISTONE ACETYLTRANSFERASE"/>
    <property type="match status" value="1"/>
</dbReference>
<dbReference type="PANTHER" id="PTHR10615:SF218">
    <property type="entry name" value="HISTONE ACETYLTRANSFERASE ESA1"/>
    <property type="match status" value="1"/>
</dbReference>
<dbReference type="Pfam" id="PF01853">
    <property type="entry name" value="MOZ_SAS"/>
    <property type="match status" value="1"/>
</dbReference>
<dbReference type="Pfam" id="PF11717">
    <property type="entry name" value="Tudor-knot"/>
    <property type="match status" value="1"/>
</dbReference>
<dbReference type="Pfam" id="PF17772">
    <property type="entry name" value="zf-MYST"/>
    <property type="match status" value="1"/>
</dbReference>
<dbReference type="SMART" id="SM00298">
    <property type="entry name" value="CHROMO"/>
    <property type="match status" value="1"/>
</dbReference>
<dbReference type="SUPFAM" id="SSF55729">
    <property type="entry name" value="Acyl-CoA N-acyltransferases (Nat)"/>
    <property type="match status" value="1"/>
</dbReference>
<dbReference type="SUPFAM" id="SSF54160">
    <property type="entry name" value="Chromo domain-like"/>
    <property type="match status" value="1"/>
</dbReference>
<dbReference type="PROSITE" id="PS51726">
    <property type="entry name" value="MYST_HAT"/>
    <property type="match status" value="1"/>
</dbReference>
<evidence type="ECO:0000250" key="1"/>
<evidence type="ECO:0000250" key="2">
    <source>
        <dbReference type="UniProtKB" id="O94446"/>
    </source>
</evidence>
<evidence type="ECO:0000250" key="3">
    <source>
        <dbReference type="UniProtKB" id="Q08649"/>
    </source>
</evidence>
<evidence type="ECO:0000255" key="4"/>
<evidence type="ECO:0000255" key="5">
    <source>
        <dbReference type="PROSITE-ProRule" id="PRU01063"/>
    </source>
</evidence>
<evidence type="ECO:0000256" key="6">
    <source>
        <dbReference type="SAM" id="MobiDB-lite"/>
    </source>
</evidence>
<evidence type="ECO:0000305" key="7"/>
<organism>
    <name type="scientific">Debaryomyces hansenii (strain ATCC 36239 / CBS 767 / BCRC 21394 / JCM 1990 / NBRC 0083 / IGC 2968)</name>
    <name type="common">Yeast</name>
    <name type="synonym">Torulaspora hansenii</name>
    <dbReference type="NCBI Taxonomy" id="284592"/>
    <lineage>
        <taxon>Eukaryota</taxon>
        <taxon>Fungi</taxon>
        <taxon>Dikarya</taxon>
        <taxon>Ascomycota</taxon>
        <taxon>Saccharomycotina</taxon>
        <taxon>Pichiomycetes</taxon>
        <taxon>Debaryomycetaceae</taxon>
        <taxon>Debaryomyces</taxon>
    </lineage>
</organism>
<proteinExistence type="inferred from homology"/>
<reference key="1">
    <citation type="journal article" date="2004" name="Nature">
        <title>Genome evolution in yeasts.</title>
        <authorList>
            <person name="Dujon B."/>
            <person name="Sherman D."/>
            <person name="Fischer G."/>
            <person name="Durrens P."/>
            <person name="Casaregola S."/>
            <person name="Lafontaine I."/>
            <person name="de Montigny J."/>
            <person name="Marck C."/>
            <person name="Neuveglise C."/>
            <person name="Talla E."/>
            <person name="Goffard N."/>
            <person name="Frangeul L."/>
            <person name="Aigle M."/>
            <person name="Anthouard V."/>
            <person name="Babour A."/>
            <person name="Barbe V."/>
            <person name="Barnay S."/>
            <person name="Blanchin S."/>
            <person name="Beckerich J.-M."/>
            <person name="Beyne E."/>
            <person name="Bleykasten C."/>
            <person name="Boisrame A."/>
            <person name="Boyer J."/>
            <person name="Cattolico L."/>
            <person name="Confanioleri F."/>
            <person name="de Daruvar A."/>
            <person name="Despons L."/>
            <person name="Fabre E."/>
            <person name="Fairhead C."/>
            <person name="Ferry-Dumazet H."/>
            <person name="Groppi A."/>
            <person name="Hantraye F."/>
            <person name="Hennequin C."/>
            <person name="Jauniaux N."/>
            <person name="Joyet P."/>
            <person name="Kachouri R."/>
            <person name="Kerrest A."/>
            <person name="Koszul R."/>
            <person name="Lemaire M."/>
            <person name="Lesur I."/>
            <person name="Ma L."/>
            <person name="Muller H."/>
            <person name="Nicaud J.-M."/>
            <person name="Nikolski M."/>
            <person name="Oztas S."/>
            <person name="Ozier-Kalogeropoulos O."/>
            <person name="Pellenz S."/>
            <person name="Potier S."/>
            <person name="Richard G.-F."/>
            <person name="Straub M.-L."/>
            <person name="Suleau A."/>
            <person name="Swennen D."/>
            <person name="Tekaia F."/>
            <person name="Wesolowski-Louvel M."/>
            <person name="Westhof E."/>
            <person name="Wirth B."/>
            <person name="Zeniou-Meyer M."/>
            <person name="Zivanovic Y."/>
            <person name="Bolotin-Fukuhara M."/>
            <person name="Thierry A."/>
            <person name="Bouchier C."/>
            <person name="Caudron B."/>
            <person name="Scarpelli C."/>
            <person name="Gaillardin C."/>
            <person name="Weissenbach J."/>
            <person name="Wincker P."/>
            <person name="Souciet J.-L."/>
        </authorList>
    </citation>
    <scope>NUCLEOTIDE SEQUENCE [LARGE SCALE GENOMIC DNA]</scope>
    <source>
        <strain>ATCC 36239 / CBS 767 / BCRC 21394 / JCM 1990 / NBRC 0083 / IGC 2968</strain>
    </source>
</reference>
<name>ESA1_DEBHA</name>
<keyword id="KW-0007">Acetylation</keyword>
<keyword id="KW-0010">Activator</keyword>
<keyword id="KW-0156">Chromatin regulator</keyword>
<keyword id="KW-0158">Chromosome</keyword>
<keyword id="KW-0227">DNA damage</keyword>
<keyword id="KW-0234">DNA repair</keyword>
<keyword id="KW-0539">Nucleus</keyword>
<keyword id="KW-1185">Reference proteome</keyword>
<keyword id="KW-0804">Transcription</keyword>
<keyword id="KW-0805">Transcription regulation</keyword>
<keyword id="KW-0808">Transferase</keyword>
<accession>Q6BU95</accession>
<protein>
    <recommendedName>
        <fullName>Histone acetyltransferase ESA1</fullName>
        <ecNumber evidence="3">2.3.1.48</ecNumber>
    </recommendedName>
    <alternativeName>
        <fullName evidence="7">Protein 2-hydroxyisobutyryltransferase ESA1</fullName>
        <ecNumber evidence="2">2.3.1.-</ecNumber>
    </alternativeName>
    <alternativeName>
        <fullName evidence="7">Protein acetyltransferase ESA1</fullName>
        <ecNumber evidence="3">2.3.1.-</ecNumber>
    </alternativeName>
    <alternativeName>
        <fullName evidence="7">Protein crotonyltransferase ESA1</fullName>
        <ecNumber evidence="3">2.3.1.-</ecNumber>
    </alternativeName>
</protein>
<comment type="function">
    <text evidence="2 3">Catalytic component of the NuA4 histone acetyltransferase (HAT) complex which is involved in epigenetic transcriptional activation of selected genes principally by acetylation of nucleosomal histones H4, H3, H2B, H2A and H2A variant H2A.Z (By similarity). Acetylates histone H4 to form H4K5ac, H4K8ac, H4K12ac and H4K16ac, histone H3 to form H3K14ac, and histone H2A to form H2AK4ac and H2AK7ac (By similarity). The NuA4 complex is involved in the DNA damage response and is required for chromosome segregation. The NuA4 complex plays a direct role in repair of DNA double-strand breaks (DSBs) through homologous recombination (By similarity). Recruitment to promoters depends on H3K4me. Also acetylates non-histone proteins (By similarity). In addition to protein acetyltransferase, can use different acyl-CoA substrates, such as 2-hydroxyisobutanoyl-CoA (2-hydroxyisobutyryl-CoA) or (2E)-butenoyl-CoA (crotonyl-CoA), and is able to mediate protein 2-hydroxyisobutyrylation and crotonylation, respectively (By similarity).</text>
</comment>
<comment type="catalytic activity">
    <reaction evidence="2">
        <text>L-lysyl-[histone] + acetyl-CoA = N(6)-acetyl-L-lysyl-[histone] + CoA + H(+)</text>
        <dbReference type="Rhea" id="RHEA:21992"/>
        <dbReference type="Rhea" id="RHEA-COMP:9845"/>
        <dbReference type="Rhea" id="RHEA-COMP:11338"/>
        <dbReference type="ChEBI" id="CHEBI:15378"/>
        <dbReference type="ChEBI" id="CHEBI:29969"/>
        <dbReference type="ChEBI" id="CHEBI:57287"/>
        <dbReference type="ChEBI" id="CHEBI:57288"/>
        <dbReference type="ChEBI" id="CHEBI:61930"/>
        <dbReference type="EC" id="2.3.1.48"/>
    </reaction>
    <physiologicalReaction direction="left-to-right" evidence="2">
        <dbReference type="Rhea" id="RHEA:21993"/>
    </physiologicalReaction>
</comment>
<comment type="catalytic activity">
    <reaction evidence="3">
        <text>L-lysyl-[protein] + acetyl-CoA = N(6)-acetyl-L-lysyl-[protein] + CoA + H(+)</text>
        <dbReference type="Rhea" id="RHEA:45948"/>
        <dbReference type="Rhea" id="RHEA-COMP:9752"/>
        <dbReference type="Rhea" id="RHEA-COMP:10731"/>
        <dbReference type="ChEBI" id="CHEBI:15378"/>
        <dbReference type="ChEBI" id="CHEBI:29969"/>
        <dbReference type="ChEBI" id="CHEBI:57287"/>
        <dbReference type="ChEBI" id="CHEBI:57288"/>
        <dbReference type="ChEBI" id="CHEBI:61930"/>
    </reaction>
    <physiologicalReaction direction="left-to-right" evidence="3">
        <dbReference type="Rhea" id="RHEA:45949"/>
    </physiologicalReaction>
</comment>
<comment type="catalytic activity">
    <reaction evidence="2">
        <text>2-hydroxyisobutanoyl-CoA + L-lysyl-[protein] = N(6)-(2-hydroxyisobutanoyl)-L-lysyl-[protein] + CoA + H(+)</text>
        <dbReference type="Rhea" id="RHEA:24180"/>
        <dbReference type="Rhea" id="RHEA-COMP:9752"/>
        <dbReference type="Rhea" id="RHEA-COMP:15921"/>
        <dbReference type="ChEBI" id="CHEBI:15378"/>
        <dbReference type="ChEBI" id="CHEBI:29969"/>
        <dbReference type="ChEBI" id="CHEBI:57287"/>
        <dbReference type="ChEBI" id="CHEBI:131780"/>
        <dbReference type="ChEBI" id="CHEBI:144968"/>
    </reaction>
    <physiologicalReaction direction="left-to-right" evidence="2">
        <dbReference type="Rhea" id="RHEA:24181"/>
    </physiologicalReaction>
</comment>
<comment type="catalytic activity">
    <reaction evidence="3">
        <text>(2E)-butenoyl-CoA + L-lysyl-[protein] = N(6)-(2E)-butenoyl-L-lysyl-[protein] + CoA + H(+)</text>
        <dbReference type="Rhea" id="RHEA:53908"/>
        <dbReference type="Rhea" id="RHEA-COMP:9752"/>
        <dbReference type="Rhea" id="RHEA-COMP:13707"/>
        <dbReference type="ChEBI" id="CHEBI:15378"/>
        <dbReference type="ChEBI" id="CHEBI:29969"/>
        <dbReference type="ChEBI" id="CHEBI:57287"/>
        <dbReference type="ChEBI" id="CHEBI:57332"/>
        <dbReference type="ChEBI" id="CHEBI:137954"/>
    </reaction>
    <physiologicalReaction direction="left-to-right" evidence="3">
        <dbReference type="Rhea" id="RHEA:53909"/>
    </physiologicalReaction>
</comment>
<comment type="subunit">
    <text evidence="3">Component of the NuA4 histone acetyltransferase complex.</text>
</comment>
<comment type="subcellular location">
    <subcellularLocation>
        <location evidence="2">Nucleus</location>
    </subcellularLocation>
    <subcellularLocation>
        <location evidence="2">Chromosome</location>
    </subcellularLocation>
    <text evidence="2">Following DNA damage, localizes to sites of DNA damage, such as double stand breaks (DSBs).</text>
</comment>
<comment type="domain">
    <text evidence="3">The ESA1-RPD3 motif is common to ESA1 and RPD3 and is required for ESA1 histone acetyl-transferase (HAT) activity and RPD3 histone deacetylase (HDAC) activity.</text>
</comment>
<comment type="PTM">
    <text evidence="3">Autoacetylation at Lys-292 is required for proper function.</text>
</comment>
<comment type="similarity">
    <text evidence="7">Belongs to the MYST (SAS/MOZ) family.</text>
</comment>
<feature type="chain" id="PRO_0000051556" description="Histone acetyltransferase ESA1">
    <location>
        <begin position="1"/>
        <end position="521"/>
    </location>
</feature>
<feature type="domain" description="Tudor-knot" evidence="4">
    <location>
        <begin position="39"/>
        <end position="90"/>
    </location>
</feature>
<feature type="domain" description="MYST-type HAT" evidence="5">
    <location>
        <begin position="192"/>
        <end position="509"/>
    </location>
</feature>
<feature type="zinc finger region" description="C2HC MYST-type; degenerate" evidence="5">
    <location>
        <begin position="225"/>
        <end position="250"/>
    </location>
</feature>
<feature type="region of interest" description="Disordered" evidence="6">
    <location>
        <begin position="1"/>
        <end position="32"/>
    </location>
</feature>
<feature type="region of interest" description="Disordered" evidence="6">
    <location>
        <begin position="100"/>
        <end position="154"/>
    </location>
</feature>
<feature type="region of interest" description="Disordered" evidence="6">
    <location>
        <begin position="403"/>
        <end position="438"/>
    </location>
</feature>
<feature type="short sequence motif" description="ESA1-RPD3 motif" evidence="1">
    <location>
        <begin position="275"/>
        <end position="296"/>
    </location>
</feature>
<feature type="compositionally biased region" description="Polar residues" evidence="6">
    <location>
        <begin position="9"/>
        <end position="20"/>
    </location>
</feature>
<feature type="compositionally biased region" description="Basic and acidic residues" evidence="6">
    <location>
        <begin position="101"/>
        <end position="113"/>
    </location>
</feature>
<feature type="compositionally biased region" description="Basic residues" evidence="6">
    <location>
        <begin position="114"/>
        <end position="123"/>
    </location>
</feature>
<feature type="compositionally biased region" description="Low complexity" evidence="6">
    <location>
        <begin position="124"/>
        <end position="133"/>
    </location>
</feature>
<feature type="compositionally biased region" description="Polar residues" evidence="6">
    <location>
        <begin position="403"/>
        <end position="418"/>
    </location>
</feature>
<feature type="compositionally biased region" description="Polar residues" evidence="6">
    <location>
        <begin position="426"/>
        <end position="436"/>
    </location>
</feature>
<feature type="active site" description="Proton donor/acceptor" evidence="3">
    <location>
        <position position="368"/>
    </location>
</feature>
<feature type="binding site" evidence="3">
    <location>
        <begin position="333"/>
        <end position="337"/>
    </location>
    <ligand>
        <name>acetyl-CoA</name>
        <dbReference type="ChEBI" id="CHEBI:57288"/>
    </ligand>
</feature>
<feature type="binding site" evidence="3">
    <location>
        <begin position="342"/>
        <end position="348"/>
    </location>
    <ligand>
        <name>acetyl-CoA</name>
        <dbReference type="ChEBI" id="CHEBI:57288"/>
    </ligand>
</feature>
<feature type="binding site" evidence="3">
    <location>
        <position position="372"/>
    </location>
    <ligand>
        <name>acetyl-CoA</name>
        <dbReference type="ChEBI" id="CHEBI:57288"/>
    </ligand>
</feature>
<feature type="site" description="Important for catalytic activity" evidence="3">
    <location>
        <position position="334"/>
    </location>
</feature>
<feature type="modified residue" description="N6-acetyllysine; by autocatalysis" evidence="3">
    <location>
        <position position="292"/>
    </location>
</feature>
<gene>
    <name type="primary">ESA1</name>
    <name type="ordered locus">DEHA2C12628g</name>
</gene>
<sequence length="521" mass="59628">MSVGEDKSGTATPQHNTSIRITDDEERSDEKKFTDDDIITGCKLYVSKDGEYRLAEILQDHMKKGKKVFYVHYQEFNKRLDEWISADRIDFTRALISPQVKVDKKDDKKEGKSKTSKKSKSKNGKTGSKSVTSTPQPNEDTAPGTPRNDDEMDLDNLNVQGLKRPGEEVSREDEIKKLRTSGSMTQNHSEVARVRNLSSVILGEHIIEPWYFSPYPIELTEEDEIYICDFTLAYFGSLKQFERFRTKCSMKHPPGNEIYRDSKVSFWEIDGRKQRTWCRNLCLLSKLFLDHKTLYYDVDPFLFYIMTVKSSQGHHVVGYFSKEKESADGYNVACILTLPCYQKMGFGKLLIQFSYMLSNVENKVGSPEKPLSDLGLLSYRAFWTDTLVKLLVERNNPHLFKKNNPQLLTEASSKDSSVSPPPGGRQSANIQNGNTPSSDITIDEISSITCMTTTDILHTLTALQILRYYKGQHIIVITDHVMAMYDKLVKKIKDKKKHELDPSKLSWTPPAFTANQLRFGW</sequence>